<proteinExistence type="inferred from homology"/>
<feature type="chain" id="PRO_1000127582" description="D-aminoacyl-tRNA deacylase">
    <location>
        <begin position="1"/>
        <end position="147"/>
    </location>
</feature>
<feature type="short sequence motif" description="Gly-cisPro motif, important for rejection of L-amino acids" evidence="1">
    <location>
        <begin position="136"/>
        <end position="137"/>
    </location>
</feature>
<sequence>MKIIIQRVKKAQVSIEGQIQGKINQGLLLLVGVGPEDQEEDLDYAVRKLVNMRIFSDAEGKMNLSVKDIEGEILSISQFTLFADTKRGNRPAFTGAAKPDMASDFYDAFNQKLAQEVPVQTGIFGADMQVELVNNGPVTIILDTKKR</sequence>
<organism>
    <name type="scientific">Streptococcus pneumoniae (strain CGSP14)</name>
    <dbReference type="NCBI Taxonomy" id="516950"/>
    <lineage>
        <taxon>Bacteria</taxon>
        <taxon>Bacillati</taxon>
        <taxon>Bacillota</taxon>
        <taxon>Bacilli</taxon>
        <taxon>Lactobacillales</taxon>
        <taxon>Streptococcaceae</taxon>
        <taxon>Streptococcus</taxon>
    </lineage>
</organism>
<dbReference type="EC" id="3.1.1.96" evidence="1"/>
<dbReference type="EMBL" id="CP001033">
    <property type="protein sequence ID" value="ACB90869.1"/>
    <property type="molecule type" value="Genomic_DNA"/>
</dbReference>
<dbReference type="RefSeq" id="WP_000691405.1">
    <property type="nucleotide sequence ID" value="NC_010582.1"/>
</dbReference>
<dbReference type="SMR" id="B2IRP8"/>
<dbReference type="KEGG" id="spw:SPCG_1617"/>
<dbReference type="HOGENOM" id="CLU_076901_1_0_9"/>
<dbReference type="GO" id="GO:0005737">
    <property type="term" value="C:cytoplasm"/>
    <property type="evidence" value="ECO:0007669"/>
    <property type="project" value="UniProtKB-SubCell"/>
</dbReference>
<dbReference type="GO" id="GO:0051500">
    <property type="term" value="F:D-tyrosyl-tRNA(Tyr) deacylase activity"/>
    <property type="evidence" value="ECO:0007669"/>
    <property type="project" value="TreeGrafter"/>
</dbReference>
<dbReference type="GO" id="GO:0106026">
    <property type="term" value="F:Gly-tRNA(Ala) deacylase activity"/>
    <property type="evidence" value="ECO:0007669"/>
    <property type="project" value="UniProtKB-UniRule"/>
</dbReference>
<dbReference type="GO" id="GO:0043908">
    <property type="term" value="F:Ser(Gly)-tRNA(Ala) hydrolase activity"/>
    <property type="evidence" value="ECO:0007669"/>
    <property type="project" value="UniProtKB-UniRule"/>
</dbReference>
<dbReference type="GO" id="GO:0000049">
    <property type="term" value="F:tRNA binding"/>
    <property type="evidence" value="ECO:0007669"/>
    <property type="project" value="UniProtKB-UniRule"/>
</dbReference>
<dbReference type="GO" id="GO:0019478">
    <property type="term" value="P:D-amino acid catabolic process"/>
    <property type="evidence" value="ECO:0007669"/>
    <property type="project" value="UniProtKB-UniRule"/>
</dbReference>
<dbReference type="CDD" id="cd00563">
    <property type="entry name" value="Dtyr_deacylase"/>
    <property type="match status" value="1"/>
</dbReference>
<dbReference type="FunFam" id="3.50.80.10:FF:000001">
    <property type="entry name" value="D-aminoacyl-tRNA deacylase"/>
    <property type="match status" value="1"/>
</dbReference>
<dbReference type="Gene3D" id="3.50.80.10">
    <property type="entry name" value="D-tyrosyl-tRNA(Tyr) deacylase"/>
    <property type="match status" value="1"/>
</dbReference>
<dbReference type="HAMAP" id="MF_00518">
    <property type="entry name" value="Deacylase_Dtd"/>
    <property type="match status" value="1"/>
</dbReference>
<dbReference type="InterPro" id="IPR003732">
    <property type="entry name" value="Daa-tRNA_deacyls_DTD"/>
</dbReference>
<dbReference type="InterPro" id="IPR023509">
    <property type="entry name" value="DTD-like_sf"/>
</dbReference>
<dbReference type="NCBIfam" id="TIGR00256">
    <property type="entry name" value="D-aminoacyl-tRNA deacylase"/>
    <property type="match status" value="1"/>
</dbReference>
<dbReference type="PANTHER" id="PTHR10472:SF5">
    <property type="entry name" value="D-AMINOACYL-TRNA DEACYLASE 1"/>
    <property type="match status" value="1"/>
</dbReference>
<dbReference type="PANTHER" id="PTHR10472">
    <property type="entry name" value="D-TYROSYL-TRNA TYR DEACYLASE"/>
    <property type="match status" value="1"/>
</dbReference>
<dbReference type="Pfam" id="PF02580">
    <property type="entry name" value="Tyr_Deacylase"/>
    <property type="match status" value="1"/>
</dbReference>
<dbReference type="SUPFAM" id="SSF69500">
    <property type="entry name" value="DTD-like"/>
    <property type="match status" value="1"/>
</dbReference>
<gene>
    <name evidence="1" type="primary">dtd</name>
    <name type="ordered locus">SPCG_1617</name>
</gene>
<comment type="function">
    <text evidence="1">An aminoacyl-tRNA editing enzyme that deacylates mischarged D-aminoacyl-tRNAs. Also deacylates mischarged glycyl-tRNA(Ala), protecting cells against glycine mischarging by AlaRS. Acts via tRNA-based rather than protein-based catalysis; rejects L-amino acids rather than detecting D-amino acids in the active site. By recycling D-aminoacyl-tRNA to D-amino acids and free tRNA molecules, this enzyme counteracts the toxicity associated with the formation of D-aminoacyl-tRNA entities in vivo and helps enforce protein L-homochirality.</text>
</comment>
<comment type="catalytic activity">
    <reaction evidence="1">
        <text>glycyl-tRNA(Ala) + H2O = tRNA(Ala) + glycine + H(+)</text>
        <dbReference type="Rhea" id="RHEA:53744"/>
        <dbReference type="Rhea" id="RHEA-COMP:9657"/>
        <dbReference type="Rhea" id="RHEA-COMP:13640"/>
        <dbReference type="ChEBI" id="CHEBI:15377"/>
        <dbReference type="ChEBI" id="CHEBI:15378"/>
        <dbReference type="ChEBI" id="CHEBI:57305"/>
        <dbReference type="ChEBI" id="CHEBI:78442"/>
        <dbReference type="ChEBI" id="CHEBI:78522"/>
        <dbReference type="EC" id="3.1.1.96"/>
    </reaction>
</comment>
<comment type="catalytic activity">
    <reaction evidence="1">
        <text>a D-aminoacyl-tRNA + H2O = a tRNA + a D-alpha-amino acid + H(+)</text>
        <dbReference type="Rhea" id="RHEA:13953"/>
        <dbReference type="Rhea" id="RHEA-COMP:10123"/>
        <dbReference type="Rhea" id="RHEA-COMP:10124"/>
        <dbReference type="ChEBI" id="CHEBI:15377"/>
        <dbReference type="ChEBI" id="CHEBI:15378"/>
        <dbReference type="ChEBI" id="CHEBI:59871"/>
        <dbReference type="ChEBI" id="CHEBI:78442"/>
        <dbReference type="ChEBI" id="CHEBI:79333"/>
        <dbReference type="EC" id="3.1.1.96"/>
    </reaction>
</comment>
<comment type="subunit">
    <text evidence="1">Homodimer.</text>
</comment>
<comment type="subcellular location">
    <subcellularLocation>
        <location evidence="1">Cytoplasm</location>
    </subcellularLocation>
</comment>
<comment type="domain">
    <text evidence="1">A Gly-cisPro motif from one monomer fits into the active site of the other monomer to allow specific chiral rejection of L-amino acids.</text>
</comment>
<comment type="similarity">
    <text evidence="1">Belongs to the DTD family.</text>
</comment>
<name>DTD_STRPS</name>
<evidence type="ECO:0000255" key="1">
    <source>
        <dbReference type="HAMAP-Rule" id="MF_00518"/>
    </source>
</evidence>
<keyword id="KW-0963">Cytoplasm</keyword>
<keyword id="KW-0378">Hydrolase</keyword>
<keyword id="KW-0694">RNA-binding</keyword>
<keyword id="KW-0820">tRNA-binding</keyword>
<reference key="1">
    <citation type="journal article" date="2009" name="BMC Genomics">
        <title>Genome evolution driven by host adaptations results in a more virulent and antimicrobial-resistant Streptococcus pneumoniae serotype 14.</title>
        <authorList>
            <person name="Ding F."/>
            <person name="Tang P."/>
            <person name="Hsu M.-H."/>
            <person name="Cui P."/>
            <person name="Hu S."/>
            <person name="Yu J."/>
            <person name="Chiu C.-H."/>
        </authorList>
    </citation>
    <scope>NUCLEOTIDE SEQUENCE [LARGE SCALE GENOMIC DNA]</scope>
    <source>
        <strain>CGSP14</strain>
    </source>
</reference>
<accession>B2IRP8</accession>
<protein>
    <recommendedName>
        <fullName evidence="1">D-aminoacyl-tRNA deacylase</fullName>
        <shortName evidence="1">DTD</shortName>
        <ecNumber evidence="1">3.1.1.96</ecNumber>
    </recommendedName>
    <alternativeName>
        <fullName evidence="1">Gly-tRNA(Ala) deacylase</fullName>
    </alternativeName>
</protein>